<proteinExistence type="inferred from homology"/>
<name>RS11_ECO45</name>
<comment type="function">
    <text evidence="1">Located on the platform of the 30S subunit, it bridges several disparate RNA helices of the 16S rRNA. Forms part of the Shine-Dalgarno cleft in the 70S ribosome.</text>
</comment>
<comment type="subunit">
    <text evidence="1">Part of the 30S ribosomal subunit. Interacts with proteins S7 and S18. Binds to IF-3.</text>
</comment>
<comment type="similarity">
    <text evidence="1">Belongs to the universal ribosomal protein uS11 family.</text>
</comment>
<evidence type="ECO:0000255" key="1">
    <source>
        <dbReference type="HAMAP-Rule" id="MF_01310"/>
    </source>
</evidence>
<evidence type="ECO:0000305" key="2"/>
<accession>B7MCR3</accession>
<dbReference type="EMBL" id="CU928161">
    <property type="protein sequence ID" value="CAR04902.1"/>
    <property type="molecule type" value="Genomic_DNA"/>
</dbReference>
<dbReference type="RefSeq" id="WP_001029684.1">
    <property type="nucleotide sequence ID" value="NC_011742.1"/>
</dbReference>
<dbReference type="EMDB" id="EMD-20056"/>
<dbReference type="EMDB" id="EMD-20057"/>
<dbReference type="EMDB" id="EMD-20058"/>
<dbReference type="EMDB" id="EMD-20121"/>
<dbReference type="EMDB" id="EMD-21468"/>
<dbReference type="EMDB" id="EMD-21469"/>
<dbReference type="EMDB" id="EMD-21470"/>
<dbReference type="EMDB" id="EMD-21471"/>
<dbReference type="EMDB" id="EMD-21472"/>
<dbReference type="EMDB" id="EMD-21474"/>
<dbReference type="EMDB" id="EMD-21475"/>
<dbReference type="EMDB" id="EMD-21476"/>
<dbReference type="EMDB" id="EMD-21477"/>
<dbReference type="EMDB" id="EMD-21482"/>
<dbReference type="EMDB" id="EMD-22082"/>
<dbReference type="EMDB" id="EMD-22084"/>
<dbReference type="EMDB" id="EMD-22087"/>
<dbReference type="EMDB" id="EMD-22107"/>
<dbReference type="EMDB" id="EMD-22141"/>
<dbReference type="EMDB" id="EMD-22142"/>
<dbReference type="EMDB" id="EMD-22181"/>
<dbReference type="EMDB" id="EMD-22192"/>
<dbReference type="EMDB" id="EMD-22193"/>
<dbReference type="EMDB" id="EMD-24800"/>
<dbReference type="EMDB" id="EMD-24801"/>
<dbReference type="EMDB" id="EMD-24802"/>
<dbReference type="EMDB" id="EMD-24804"/>
<dbReference type="EMDB" id="EMD-24944"/>
<dbReference type="EMDB" id="EMD-26486"/>
<dbReference type="EMDB" id="EMD-28692"/>
<dbReference type="EMDB" id="EMD-28720"/>
<dbReference type="EMDB" id="EMD-29214"/>
<dbReference type="EMDB" id="EMD-42453"/>
<dbReference type="EMDB" id="EMD-42454"/>
<dbReference type="EMDB" id="EMD-42473"/>
<dbReference type="EMDB" id="EMD-42474"/>
<dbReference type="EMDB" id="EMD-42477"/>
<dbReference type="EMDB" id="EMD-42479"/>
<dbReference type="EMDB" id="EMD-42492"/>
<dbReference type="EMDB" id="EMD-42493"/>
<dbReference type="EMDB" id="EMD-42503"/>
<dbReference type="EMDB" id="EMD-43490"/>
<dbReference type="EMDB" id="EMD-43491"/>
<dbReference type="EMDB" id="EMD-48479"/>
<dbReference type="EMDB" id="EMD-48513"/>
<dbReference type="EMDB" id="EMD-7014"/>
<dbReference type="EMDB" id="EMD-7015"/>
<dbReference type="EMDB" id="EMD-7016"/>
<dbReference type="EMDB" id="EMD-7970"/>
<dbReference type="EMDB" id="EMD-8521"/>
<dbReference type="EMDB" id="EMD-8522"/>
<dbReference type="EMDB" id="EMD-8621"/>
<dbReference type="EMDB" id="EMD-8826"/>
<dbReference type="EMDB" id="EMD-8829"/>
<dbReference type="SMR" id="B7MCR3"/>
<dbReference type="IntAct" id="B7MCR3">
    <property type="interactions" value="1"/>
</dbReference>
<dbReference type="GeneID" id="93778690"/>
<dbReference type="KEGG" id="ecz:ECS88_3685"/>
<dbReference type="HOGENOM" id="CLU_072439_5_0_6"/>
<dbReference type="Proteomes" id="UP000000747">
    <property type="component" value="Chromosome"/>
</dbReference>
<dbReference type="GO" id="GO:1990904">
    <property type="term" value="C:ribonucleoprotein complex"/>
    <property type="evidence" value="ECO:0007669"/>
    <property type="project" value="UniProtKB-KW"/>
</dbReference>
<dbReference type="GO" id="GO:0005840">
    <property type="term" value="C:ribosome"/>
    <property type="evidence" value="ECO:0007669"/>
    <property type="project" value="UniProtKB-KW"/>
</dbReference>
<dbReference type="GO" id="GO:0019843">
    <property type="term" value="F:rRNA binding"/>
    <property type="evidence" value="ECO:0007669"/>
    <property type="project" value="UniProtKB-UniRule"/>
</dbReference>
<dbReference type="GO" id="GO:0003735">
    <property type="term" value="F:structural constituent of ribosome"/>
    <property type="evidence" value="ECO:0007669"/>
    <property type="project" value="InterPro"/>
</dbReference>
<dbReference type="GO" id="GO:0006412">
    <property type="term" value="P:translation"/>
    <property type="evidence" value="ECO:0007669"/>
    <property type="project" value="UniProtKB-UniRule"/>
</dbReference>
<dbReference type="FunFam" id="3.30.420.80:FF:000001">
    <property type="entry name" value="30S ribosomal protein S11"/>
    <property type="match status" value="1"/>
</dbReference>
<dbReference type="Gene3D" id="3.30.420.80">
    <property type="entry name" value="Ribosomal protein S11"/>
    <property type="match status" value="1"/>
</dbReference>
<dbReference type="HAMAP" id="MF_01310">
    <property type="entry name" value="Ribosomal_uS11"/>
    <property type="match status" value="1"/>
</dbReference>
<dbReference type="InterPro" id="IPR001971">
    <property type="entry name" value="Ribosomal_uS11"/>
</dbReference>
<dbReference type="InterPro" id="IPR019981">
    <property type="entry name" value="Ribosomal_uS11_bac-type"/>
</dbReference>
<dbReference type="InterPro" id="IPR018102">
    <property type="entry name" value="Ribosomal_uS11_CS"/>
</dbReference>
<dbReference type="InterPro" id="IPR036967">
    <property type="entry name" value="Ribosomal_uS11_sf"/>
</dbReference>
<dbReference type="NCBIfam" id="NF003698">
    <property type="entry name" value="PRK05309.1"/>
    <property type="match status" value="1"/>
</dbReference>
<dbReference type="NCBIfam" id="TIGR03632">
    <property type="entry name" value="uS11_bact"/>
    <property type="match status" value="1"/>
</dbReference>
<dbReference type="PANTHER" id="PTHR11759">
    <property type="entry name" value="40S RIBOSOMAL PROTEIN S14/30S RIBOSOMAL PROTEIN S11"/>
    <property type="match status" value="1"/>
</dbReference>
<dbReference type="Pfam" id="PF00411">
    <property type="entry name" value="Ribosomal_S11"/>
    <property type="match status" value="1"/>
</dbReference>
<dbReference type="PIRSF" id="PIRSF002131">
    <property type="entry name" value="Ribosomal_S11"/>
    <property type="match status" value="1"/>
</dbReference>
<dbReference type="SUPFAM" id="SSF53137">
    <property type="entry name" value="Translational machinery components"/>
    <property type="match status" value="1"/>
</dbReference>
<dbReference type="PROSITE" id="PS00054">
    <property type="entry name" value="RIBOSOMAL_S11"/>
    <property type="match status" value="1"/>
</dbReference>
<reference key="1">
    <citation type="journal article" date="2009" name="PLoS Genet.">
        <title>Organised genome dynamics in the Escherichia coli species results in highly diverse adaptive paths.</title>
        <authorList>
            <person name="Touchon M."/>
            <person name="Hoede C."/>
            <person name="Tenaillon O."/>
            <person name="Barbe V."/>
            <person name="Baeriswyl S."/>
            <person name="Bidet P."/>
            <person name="Bingen E."/>
            <person name="Bonacorsi S."/>
            <person name="Bouchier C."/>
            <person name="Bouvet O."/>
            <person name="Calteau A."/>
            <person name="Chiapello H."/>
            <person name="Clermont O."/>
            <person name="Cruveiller S."/>
            <person name="Danchin A."/>
            <person name="Diard M."/>
            <person name="Dossat C."/>
            <person name="Karoui M.E."/>
            <person name="Frapy E."/>
            <person name="Garry L."/>
            <person name="Ghigo J.M."/>
            <person name="Gilles A.M."/>
            <person name="Johnson J."/>
            <person name="Le Bouguenec C."/>
            <person name="Lescat M."/>
            <person name="Mangenot S."/>
            <person name="Martinez-Jehanne V."/>
            <person name="Matic I."/>
            <person name="Nassif X."/>
            <person name="Oztas S."/>
            <person name="Petit M.A."/>
            <person name="Pichon C."/>
            <person name="Rouy Z."/>
            <person name="Ruf C.S."/>
            <person name="Schneider D."/>
            <person name="Tourret J."/>
            <person name="Vacherie B."/>
            <person name="Vallenet D."/>
            <person name="Medigue C."/>
            <person name="Rocha E.P.C."/>
            <person name="Denamur E."/>
        </authorList>
    </citation>
    <scope>NUCLEOTIDE SEQUENCE [LARGE SCALE GENOMIC DNA]</scope>
    <source>
        <strain>S88 / ExPEC</strain>
    </source>
</reference>
<keyword id="KW-1185">Reference proteome</keyword>
<keyword id="KW-0687">Ribonucleoprotein</keyword>
<keyword id="KW-0689">Ribosomal protein</keyword>
<keyword id="KW-0694">RNA-binding</keyword>
<keyword id="KW-0699">rRNA-binding</keyword>
<gene>
    <name evidence="1" type="primary">rpsK</name>
    <name type="ordered locus">ECS88_3685</name>
</gene>
<feature type="chain" id="PRO_1000141087" description="Small ribosomal subunit protein uS11">
    <location>
        <begin position="1"/>
        <end position="129"/>
    </location>
</feature>
<sequence>MAKAPIRARKRVRKQVSDGVAHIHASFNNTIVTITDRQGNALGWATAGGSGFRGSRKSTPFAAQVAAERCADAVKEYGIKNLEVMVKGPGPGRESTIRALNAAGFRITNITDVTPIPHNGCRPPKKRRV</sequence>
<protein>
    <recommendedName>
        <fullName evidence="1">Small ribosomal subunit protein uS11</fullName>
    </recommendedName>
    <alternativeName>
        <fullName evidence="2">30S ribosomal protein S11</fullName>
    </alternativeName>
</protein>
<organism>
    <name type="scientific">Escherichia coli O45:K1 (strain S88 / ExPEC)</name>
    <dbReference type="NCBI Taxonomy" id="585035"/>
    <lineage>
        <taxon>Bacteria</taxon>
        <taxon>Pseudomonadati</taxon>
        <taxon>Pseudomonadota</taxon>
        <taxon>Gammaproteobacteria</taxon>
        <taxon>Enterobacterales</taxon>
        <taxon>Enterobacteriaceae</taxon>
        <taxon>Escherichia</taxon>
    </lineage>
</organism>